<dbReference type="EMBL" id="M13932">
    <property type="protein sequence ID" value="AAA60284.1"/>
    <property type="molecule type" value="mRNA"/>
</dbReference>
<dbReference type="EMBL" id="M18000">
    <property type="protein sequence ID" value="AAA60285.1"/>
    <property type="molecule type" value="Genomic_DNA"/>
</dbReference>
<dbReference type="EMBL" id="AK026570">
    <property type="protein sequence ID" value="BAB15501.1"/>
    <property type="molecule type" value="mRNA"/>
</dbReference>
<dbReference type="EMBL" id="AK311951">
    <property type="protein sequence ID" value="BAG34891.1"/>
    <property type="molecule type" value="mRNA"/>
</dbReference>
<dbReference type="EMBL" id="AC245033">
    <property type="status" value="NOT_ANNOTATED_CDS"/>
    <property type="molecule type" value="Genomic_DNA"/>
</dbReference>
<dbReference type="EMBL" id="CH471188">
    <property type="protein sequence ID" value="EAW62454.1"/>
    <property type="molecule type" value="Genomic_DNA"/>
</dbReference>
<dbReference type="EMBL" id="BC009407">
    <property type="protein sequence ID" value="AAH09407.1"/>
    <property type="molecule type" value="mRNA"/>
</dbReference>
<dbReference type="EMBL" id="BC019899">
    <property type="protein sequence ID" value="AAH19899.1"/>
    <property type="molecule type" value="mRNA"/>
</dbReference>
<dbReference type="EMBL" id="BC022370">
    <property type="protein sequence ID" value="AAH22370.1"/>
    <property type="molecule type" value="mRNA"/>
</dbReference>
<dbReference type="EMBL" id="BC049824">
    <property type="protein sequence ID" value="AAH49824.1"/>
    <property type="molecule type" value="mRNA"/>
</dbReference>
<dbReference type="EMBL" id="BC070222">
    <property type="protein sequence ID" value="AAH70222.1"/>
    <property type="molecule type" value="mRNA"/>
</dbReference>
<dbReference type="EMBL" id="BC062715">
    <property type="protein sequence ID" value="AAH62715.1"/>
    <property type="molecule type" value="mRNA"/>
</dbReference>
<dbReference type="EMBL" id="BC071928">
    <property type="protein sequence ID" value="AAH71928.1"/>
    <property type="molecule type" value="mRNA"/>
</dbReference>
<dbReference type="CCDS" id="CCDS10320.1"/>
<dbReference type="PIR" id="JT0405">
    <property type="entry name" value="R4HU17"/>
</dbReference>
<dbReference type="RefSeq" id="NP_001012.1">
    <property type="nucleotide sequence ID" value="NM_001021.6"/>
</dbReference>
<dbReference type="PDB" id="4UG0">
    <property type="method" value="EM"/>
    <property type="chains" value="SR=1-135"/>
</dbReference>
<dbReference type="PDB" id="4V6X">
    <property type="method" value="EM"/>
    <property type="resolution" value="5.00 A"/>
    <property type="chains" value="AR=1-135"/>
</dbReference>
<dbReference type="PDB" id="5A2Q">
    <property type="method" value="EM"/>
    <property type="resolution" value="3.90 A"/>
    <property type="chains" value="R=1-135"/>
</dbReference>
<dbReference type="PDB" id="5AJ0">
    <property type="method" value="EM"/>
    <property type="resolution" value="3.50 A"/>
    <property type="chains" value="BR=1-135"/>
</dbReference>
<dbReference type="PDB" id="5FLX">
    <property type="method" value="EM"/>
    <property type="resolution" value="3.90 A"/>
    <property type="chains" value="R=1-135"/>
</dbReference>
<dbReference type="PDB" id="5LKS">
    <property type="method" value="EM"/>
    <property type="resolution" value="3.60 A"/>
    <property type="chains" value="SR=1-135"/>
</dbReference>
<dbReference type="PDB" id="5OA3">
    <property type="method" value="EM"/>
    <property type="resolution" value="4.30 A"/>
    <property type="chains" value="R=1-135"/>
</dbReference>
<dbReference type="PDB" id="5T2C">
    <property type="method" value="EM"/>
    <property type="resolution" value="3.60 A"/>
    <property type="chains" value="Az=1-135"/>
</dbReference>
<dbReference type="PDB" id="5VYC">
    <property type="method" value="X-ray"/>
    <property type="resolution" value="6.00 A"/>
    <property type="chains" value="R1/R2/R3/R4/R5/R6=1-135"/>
</dbReference>
<dbReference type="PDB" id="6FEC">
    <property type="method" value="EM"/>
    <property type="resolution" value="6.30 A"/>
    <property type="chains" value="e=1-126"/>
</dbReference>
<dbReference type="PDB" id="6G18">
    <property type="method" value="EM"/>
    <property type="resolution" value="3.60 A"/>
    <property type="chains" value="R=1-135"/>
</dbReference>
<dbReference type="PDB" id="6G4S">
    <property type="method" value="EM"/>
    <property type="resolution" value="4.00 A"/>
    <property type="chains" value="R=1-135"/>
</dbReference>
<dbReference type="PDB" id="6G4W">
    <property type="method" value="EM"/>
    <property type="resolution" value="4.50 A"/>
    <property type="chains" value="R=1-135"/>
</dbReference>
<dbReference type="PDB" id="6G51">
    <property type="method" value="EM"/>
    <property type="resolution" value="4.10 A"/>
    <property type="chains" value="R=1-135"/>
</dbReference>
<dbReference type="PDB" id="6G53">
    <property type="method" value="EM"/>
    <property type="resolution" value="4.50 A"/>
    <property type="chains" value="R=1-135"/>
</dbReference>
<dbReference type="PDB" id="6G5H">
    <property type="method" value="EM"/>
    <property type="resolution" value="3.60 A"/>
    <property type="chains" value="R=1-135"/>
</dbReference>
<dbReference type="PDB" id="6G5I">
    <property type="method" value="EM"/>
    <property type="resolution" value="3.50 A"/>
    <property type="chains" value="R=1-135"/>
</dbReference>
<dbReference type="PDB" id="6IP5">
    <property type="method" value="EM"/>
    <property type="resolution" value="3.90 A"/>
    <property type="chains" value="2y=1-135"/>
</dbReference>
<dbReference type="PDB" id="6IP6">
    <property type="method" value="EM"/>
    <property type="resolution" value="4.50 A"/>
    <property type="chains" value="2y=1-135"/>
</dbReference>
<dbReference type="PDB" id="6IP8">
    <property type="method" value="EM"/>
    <property type="resolution" value="3.90 A"/>
    <property type="chains" value="2y=1-135"/>
</dbReference>
<dbReference type="PDB" id="6OLE">
    <property type="method" value="EM"/>
    <property type="resolution" value="3.10 A"/>
    <property type="chains" value="SR=2-135"/>
</dbReference>
<dbReference type="PDB" id="6OLF">
    <property type="method" value="EM"/>
    <property type="resolution" value="3.90 A"/>
    <property type="chains" value="SR=2-135"/>
</dbReference>
<dbReference type="PDB" id="6OLG">
    <property type="method" value="EM"/>
    <property type="resolution" value="3.40 A"/>
    <property type="chains" value="BR=2-126"/>
</dbReference>
<dbReference type="PDB" id="6OLI">
    <property type="method" value="EM"/>
    <property type="resolution" value="3.50 A"/>
    <property type="chains" value="SR=2-135"/>
</dbReference>
<dbReference type="PDB" id="6OLZ">
    <property type="method" value="EM"/>
    <property type="resolution" value="3.90 A"/>
    <property type="chains" value="BR=2-126"/>
</dbReference>
<dbReference type="PDB" id="6OM0">
    <property type="method" value="EM"/>
    <property type="resolution" value="3.10 A"/>
    <property type="chains" value="SR=2-135"/>
</dbReference>
<dbReference type="PDB" id="6OM7">
    <property type="method" value="EM"/>
    <property type="resolution" value="3.70 A"/>
    <property type="chains" value="SR=2-135"/>
</dbReference>
<dbReference type="PDB" id="6QZP">
    <property type="method" value="EM"/>
    <property type="resolution" value="2.90 A"/>
    <property type="chains" value="SR=1-135"/>
</dbReference>
<dbReference type="PDB" id="6XA1">
    <property type="method" value="EM"/>
    <property type="resolution" value="2.80 A"/>
    <property type="chains" value="SR=2-132"/>
</dbReference>
<dbReference type="PDB" id="6Y0G">
    <property type="method" value="EM"/>
    <property type="resolution" value="3.20 A"/>
    <property type="chains" value="SR=1-135"/>
</dbReference>
<dbReference type="PDB" id="6Y2L">
    <property type="method" value="EM"/>
    <property type="resolution" value="3.00 A"/>
    <property type="chains" value="SR=1-135"/>
</dbReference>
<dbReference type="PDB" id="6Y57">
    <property type="method" value="EM"/>
    <property type="resolution" value="3.50 A"/>
    <property type="chains" value="SR=1-135"/>
</dbReference>
<dbReference type="PDB" id="6YBD">
    <property type="method" value="EM"/>
    <property type="resolution" value="3.30 A"/>
    <property type="chains" value="M=1-135"/>
</dbReference>
<dbReference type="PDB" id="6YBS">
    <property type="method" value="EM"/>
    <property type="resolution" value="3.10 A"/>
    <property type="chains" value="X=1-135"/>
</dbReference>
<dbReference type="PDB" id="6YBW">
    <property type="method" value="EM"/>
    <property type="resolution" value="3.10 A"/>
    <property type="chains" value="M=1-135"/>
</dbReference>
<dbReference type="PDB" id="6Z6L">
    <property type="method" value="EM"/>
    <property type="resolution" value="3.00 A"/>
    <property type="chains" value="SR=1-135"/>
</dbReference>
<dbReference type="PDB" id="6Z6M">
    <property type="method" value="EM"/>
    <property type="resolution" value="3.10 A"/>
    <property type="chains" value="SR=1-135"/>
</dbReference>
<dbReference type="PDB" id="6Z6N">
    <property type="method" value="EM"/>
    <property type="resolution" value="2.90 A"/>
    <property type="chains" value="SR=1-135"/>
</dbReference>
<dbReference type="PDB" id="6ZLW">
    <property type="method" value="EM"/>
    <property type="resolution" value="2.60 A"/>
    <property type="chains" value="S=1-135"/>
</dbReference>
<dbReference type="PDB" id="6ZM7">
    <property type="method" value="EM"/>
    <property type="resolution" value="2.70 A"/>
    <property type="chains" value="SR=1-135"/>
</dbReference>
<dbReference type="PDB" id="6ZME">
    <property type="method" value="EM"/>
    <property type="resolution" value="3.00 A"/>
    <property type="chains" value="SR=1-135"/>
</dbReference>
<dbReference type="PDB" id="6ZMI">
    <property type="method" value="EM"/>
    <property type="resolution" value="2.60 A"/>
    <property type="chains" value="SR=1-135"/>
</dbReference>
<dbReference type="PDB" id="6ZMO">
    <property type="method" value="EM"/>
    <property type="resolution" value="3.10 A"/>
    <property type="chains" value="SR=1-135"/>
</dbReference>
<dbReference type="PDB" id="6ZMT">
    <property type="method" value="EM"/>
    <property type="resolution" value="3.00 A"/>
    <property type="chains" value="S=1-135"/>
</dbReference>
<dbReference type="PDB" id="6ZMW">
    <property type="method" value="EM"/>
    <property type="resolution" value="3.70 A"/>
    <property type="chains" value="M=1-135"/>
</dbReference>
<dbReference type="PDB" id="6ZN5">
    <property type="method" value="EM"/>
    <property type="resolution" value="3.20 A"/>
    <property type="chains" value="S=2-133"/>
</dbReference>
<dbReference type="PDB" id="6ZOJ">
    <property type="method" value="EM"/>
    <property type="resolution" value="2.80 A"/>
    <property type="chains" value="R=1-135"/>
</dbReference>
<dbReference type="PDB" id="6ZOK">
    <property type="method" value="EM"/>
    <property type="resolution" value="2.80 A"/>
    <property type="chains" value="R=1-135"/>
</dbReference>
<dbReference type="PDB" id="6ZOL">
    <property type="method" value="EM"/>
    <property type="resolution" value="2.80 A"/>
    <property type="chains" value="R=1-135"/>
</dbReference>
<dbReference type="PDB" id="6ZON">
    <property type="method" value="EM"/>
    <property type="resolution" value="3.00 A"/>
    <property type="chains" value="w=1-135"/>
</dbReference>
<dbReference type="PDB" id="6ZP4">
    <property type="method" value="EM"/>
    <property type="resolution" value="2.90 A"/>
    <property type="chains" value="w=1-135"/>
</dbReference>
<dbReference type="PDB" id="6ZUO">
    <property type="method" value="EM"/>
    <property type="resolution" value="3.10 A"/>
    <property type="chains" value="R=1-135"/>
</dbReference>
<dbReference type="PDB" id="6ZV6">
    <property type="method" value="EM"/>
    <property type="resolution" value="2.90 A"/>
    <property type="chains" value="R=1-135"/>
</dbReference>
<dbReference type="PDB" id="6ZVH">
    <property type="method" value="EM"/>
    <property type="resolution" value="2.90 A"/>
    <property type="chains" value="R=1-135"/>
</dbReference>
<dbReference type="PDB" id="6ZVJ">
    <property type="method" value="EM"/>
    <property type="resolution" value="3.80 A"/>
    <property type="chains" value="w=2-131"/>
</dbReference>
<dbReference type="PDB" id="6ZXD">
    <property type="method" value="EM"/>
    <property type="resolution" value="3.20 A"/>
    <property type="chains" value="R=1-135"/>
</dbReference>
<dbReference type="PDB" id="6ZXE">
    <property type="method" value="EM"/>
    <property type="resolution" value="3.00 A"/>
    <property type="chains" value="R=1-135"/>
</dbReference>
<dbReference type="PDB" id="6ZXF">
    <property type="method" value="EM"/>
    <property type="resolution" value="3.70 A"/>
    <property type="chains" value="R=1-135"/>
</dbReference>
<dbReference type="PDB" id="6ZXG">
    <property type="method" value="EM"/>
    <property type="resolution" value="2.60 A"/>
    <property type="chains" value="R=1-135"/>
</dbReference>
<dbReference type="PDB" id="6ZXH">
    <property type="method" value="EM"/>
    <property type="resolution" value="2.70 A"/>
    <property type="chains" value="R=1-135"/>
</dbReference>
<dbReference type="PDB" id="7A09">
    <property type="method" value="EM"/>
    <property type="resolution" value="3.50 A"/>
    <property type="chains" value="w=1-135"/>
</dbReference>
<dbReference type="PDB" id="7K5I">
    <property type="method" value="EM"/>
    <property type="resolution" value="2.90 A"/>
    <property type="chains" value="R=1-135"/>
</dbReference>
<dbReference type="PDB" id="7MQ8">
    <property type="method" value="EM"/>
    <property type="resolution" value="3.60 A"/>
    <property type="chains" value="NU=1-135"/>
</dbReference>
<dbReference type="PDB" id="7MQ9">
    <property type="method" value="EM"/>
    <property type="resolution" value="3.87 A"/>
    <property type="chains" value="NU=1-135"/>
</dbReference>
<dbReference type="PDB" id="7MQA">
    <property type="method" value="EM"/>
    <property type="resolution" value="2.70 A"/>
    <property type="chains" value="NU=1-135"/>
</dbReference>
<dbReference type="PDB" id="7QP6">
    <property type="method" value="EM"/>
    <property type="resolution" value="4.70 A"/>
    <property type="chains" value="M=1-135"/>
</dbReference>
<dbReference type="PDB" id="7QP7">
    <property type="method" value="EM"/>
    <property type="resolution" value="3.70 A"/>
    <property type="chains" value="M=1-135"/>
</dbReference>
<dbReference type="PDB" id="7QVP">
    <property type="method" value="EM"/>
    <property type="resolution" value="3.00 A"/>
    <property type="chains" value="RR/SR=1-135"/>
</dbReference>
<dbReference type="PDB" id="7R4X">
    <property type="method" value="EM"/>
    <property type="resolution" value="2.15 A"/>
    <property type="chains" value="R=1-135"/>
</dbReference>
<dbReference type="PDB" id="7TQL">
    <property type="method" value="EM"/>
    <property type="resolution" value="3.40 A"/>
    <property type="chains" value="S=2-133"/>
</dbReference>
<dbReference type="PDB" id="7WTT">
    <property type="method" value="EM"/>
    <property type="resolution" value="3.10 A"/>
    <property type="chains" value="R=1-135"/>
</dbReference>
<dbReference type="PDB" id="7WTU">
    <property type="method" value="EM"/>
    <property type="resolution" value="3.00 A"/>
    <property type="chains" value="R=1-135"/>
</dbReference>
<dbReference type="PDB" id="7WTV">
    <property type="method" value="EM"/>
    <property type="resolution" value="3.50 A"/>
    <property type="chains" value="R=1-135"/>
</dbReference>
<dbReference type="PDB" id="7WTW">
    <property type="method" value="EM"/>
    <property type="resolution" value="3.20 A"/>
    <property type="chains" value="R=1-135"/>
</dbReference>
<dbReference type="PDB" id="7WTX">
    <property type="method" value="EM"/>
    <property type="resolution" value="3.10 A"/>
    <property type="chains" value="R=1-135"/>
</dbReference>
<dbReference type="PDB" id="7WTZ">
    <property type="method" value="EM"/>
    <property type="resolution" value="3.00 A"/>
    <property type="chains" value="R=1-135"/>
</dbReference>
<dbReference type="PDB" id="7WU0">
    <property type="method" value="EM"/>
    <property type="resolution" value="3.30 A"/>
    <property type="chains" value="R=1-135"/>
</dbReference>
<dbReference type="PDB" id="7XNX">
    <property type="method" value="EM"/>
    <property type="resolution" value="2.70 A"/>
    <property type="chains" value="SR=1-135"/>
</dbReference>
<dbReference type="PDB" id="7XNY">
    <property type="method" value="EM"/>
    <property type="resolution" value="2.50 A"/>
    <property type="chains" value="SR=1-135"/>
</dbReference>
<dbReference type="PDB" id="8G5Y">
    <property type="method" value="EM"/>
    <property type="resolution" value="2.29 A"/>
    <property type="chains" value="SR=1-135"/>
</dbReference>
<dbReference type="PDB" id="8G5Z">
    <property type="method" value="EM"/>
    <property type="resolution" value="2.64 A"/>
    <property type="chains" value="SR=2-135"/>
</dbReference>
<dbReference type="PDB" id="8G60">
    <property type="method" value="EM"/>
    <property type="resolution" value="2.54 A"/>
    <property type="chains" value="SR=1-135"/>
</dbReference>
<dbReference type="PDB" id="8G61">
    <property type="method" value="EM"/>
    <property type="resolution" value="2.94 A"/>
    <property type="chains" value="SR=1-135"/>
</dbReference>
<dbReference type="PDB" id="8G6J">
    <property type="method" value="EM"/>
    <property type="resolution" value="2.80 A"/>
    <property type="chains" value="SR=1-135"/>
</dbReference>
<dbReference type="PDB" id="8GLP">
    <property type="method" value="EM"/>
    <property type="resolution" value="1.67 A"/>
    <property type="chains" value="SR=1-135"/>
</dbReference>
<dbReference type="PDB" id="8IFD">
    <property type="method" value="EM"/>
    <property type="resolution" value="2.59 A"/>
    <property type="chains" value="2y=1-135"/>
</dbReference>
<dbReference type="PDB" id="8IFE">
    <property type="method" value="EM"/>
    <property type="resolution" value="2.57 A"/>
    <property type="chains" value="2y=1-135"/>
</dbReference>
<dbReference type="PDB" id="8JDJ">
    <property type="method" value="EM"/>
    <property type="resolution" value="2.50 A"/>
    <property type="chains" value="AD=1-135"/>
</dbReference>
<dbReference type="PDB" id="8JDK">
    <property type="method" value="EM"/>
    <property type="resolution" value="2.26 A"/>
    <property type="chains" value="AD=1-135"/>
</dbReference>
<dbReference type="PDB" id="8JDL">
    <property type="method" value="EM"/>
    <property type="resolution" value="2.42 A"/>
    <property type="chains" value="AD=1-135"/>
</dbReference>
<dbReference type="PDB" id="8JDM">
    <property type="method" value="EM"/>
    <property type="resolution" value="2.67 A"/>
    <property type="chains" value="AD=1-135"/>
</dbReference>
<dbReference type="PDB" id="8K2C">
    <property type="method" value="EM"/>
    <property type="resolution" value="2.40 A"/>
    <property type="chains" value="SR=1-135"/>
</dbReference>
<dbReference type="PDB" id="8OZ0">
    <property type="method" value="EM"/>
    <property type="resolution" value="3.50 A"/>
    <property type="chains" value="v=1-135"/>
</dbReference>
<dbReference type="PDB" id="8PJ1">
    <property type="method" value="EM"/>
    <property type="resolution" value="3.40 A"/>
    <property type="chains" value="M=1-135"/>
</dbReference>
<dbReference type="PDB" id="8PJ2">
    <property type="method" value="EM"/>
    <property type="resolution" value="3.40 A"/>
    <property type="chains" value="M=1-135"/>
</dbReference>
<dbReference type="PDB" id="8PJ3">
    <property type="method" value="EM"/>
    <property type="resolution" value="3.70 A"/>
    <property type="chains" value="M=1-135"/>
</dbReference>
<dbReference type="PDB" id="8PJ4">
    <property type="method" value="EM"/>
    <property type="resolution" value="3.20 A"/>
    <property type="chains" value="M=1-135"/>
</dbReference>
<dbReference type="PDB" id="8PJ5">
    <property type="method" value="EM"/>
    <property type="resolution" value="2.90 A"/>
    <property type="chains" value="M=1-135"/>
</dbReference>
<dbReference type="PDB" id="8PJ6">
    <property type="method" value="EM"/>
    <property type="resolution" value="2.90 A"/>
    <property type="chains" value="M=1-135"/>
</dbReference>
<dbReference type="PDB" id="8PPK">
    <property type="method" value="EM"/>
    <property type="resolution" value="2.98 A"/>
    <property type="chains" value="R=1-135"/>
</dbReference>
<dbReference type="PDB" id="8PPL">
    <property type="method" value="EM"/>
    <property type="resolution" value="2.65 A"/>
    <property type="chains" value="AR=1-135"/>
</dbReference>
<dbReference type="PDB" id="8QOI">
    <property type="method" value="EM"/>
    <property type="resolution" value="1.90 A"/>
    <property type="chains" value="SR=1-135"/>
</dbReference>
<dbReference type="PDB" id="8RG0">
    <property type="method" value="EM"/>
    <property type="resolution" value="3.40 A"/>
    <property type="chains" value="M=1-135"/>
</dbReference>
<dbReference type="PDB" id="8T4S">
    <property type="method" value="EM"/>
    <property type="resolution" value="2.60 A"/>
    <property type="chains" value="R=1-135"/>
</dbReference>
<dbReference type="PDB" id="8UKB">
    <property type="method" value="EM"/>
    <property type="resolution" value="3.05 A"/>
    <property type="chains" value="SR=1-135"/>
</dbReference>
<dbReference type="PDB" id="8XP2">
    <property type="method" value="EM"/>
    <property type="resolution" value="3.20 A"/>
    <property type="chains" value="SR=1-135"/>
</dbReference>
<dbReference type="PDB" id="8XP3">
    <property type="method" value="EM"/>
    <property type="resolution" value="3.40 A"/>
    <property type="chains" value="SR=1-135"/>
</dbReference>
<dbReference type="PDB" id="8XSX">
    <property type="method" value="EM"/>
    <property type="resolution" value="2.40 A"/>
    <property type="chains" value="SR=1-135"/>
</dbReference>
<dbReference type="PDB" id="8XSY">
    <property type="method" value="EM"/>
    <property type="resolution" value="3.00 A"/>
    <property type="chains" value="SR=1-135"/>
</dbReference>
<dbReference type="PDB" id="8XSZ">
    <property type="method" value="EM"/>
    <property type="resolution" value="3.20 A"/>
    <property type="chains" value="SR=1-135"/>
</dbReference>
<dbReference type="PDB" id="8XXL">
    <property type="method" value="EM"/>
    <property type="resolution" value="2.90 A"/>
    <property type="chains" value="SR=1-135"/>
</dbReference>
<dbReference type="PDB" id="8XXM">
    <property type="method" value="EM"/>
    <property type="resolution" value="3.20 A"/>
    <property type="chains" value="SR=1-135"/>
</dbReference>
<dbReference type="PDB" id="8XXN">
    <property type="method" value="EM"/>
    <property type="resolution" value="3.60 A"/>
    <property type="chains" value="SR=1-135"/>
</dbReference>
<dbReference type="PDB" id="8Y0W">
    <property type="method" value="EM"/>
    <property type="resolution" value="3.40 A"/>
    <property type="chains" value="SR=1-135"/>
</dbReference>
<dbReference type="PDB" id="8Y0X">
    <property type="method" value="EM"/>
    <property type="resolution" value="3.30 A"/>
    <property type="chains" value="SR=1-135"/>
</dbReference>
<dbReference type="PDB" id="8YOO">
    <property type="method" value="EM"/>
    <property type="resolution" value="2.00 A"/>
    <property type="chains" value="SR=1-135"/>
</dbReference>
<dbReference type="PDB" id="8YOP">
    <property type="method" value="EM"/>
    <property type="resolution" value="2.20 A"/>
    <property type="chains" value="SR=1-135"/>
</dbReference>
<dbReference type="PDB" id="8ZDB">
    <property type="method" value="EM"/>
    <property type="resolution" value="3.60 A"/>
    <property type="chains" value="R=1-135"/>
</dbReference>
<dbReference type="PDB" id="8ZDC">
    <property type="method" value="EM"/>
    <property type="resolution" value="3.80 A"/>
    <property type="chains" value="R=1-135"/>
</dbReference>
<dbReference type="PDB" id="8ZDD">
    <property type="method" value="EM"/>
    <property type="resolution" value="3.70 A"/>
    <property type="chains" value="R=1-135"/>
</dbReference>
<dbReference type="PDB" id="9BKD">
    <property type="method" value="EM"/>
    <property type="resolution" value="2.60 A"/>
    <property type="chains" value="M=1-135"/>
</dbReference>
<dbReference type="PDB" id="9BLN">
    <property type="method" value="EM"/>
    <property type="resolution" value="3.90 A"/>
    <property type="chains" value="M=1-135"/>
</dbReference>
<dbReference type="PDB" id="9C3H">
    <property type="method" value="EM"/>
    <property type="resolution" value="2.00 A"/>
    <property type="chains" value="SS=1-135"/>
</dbReference>
<dbReference type="PDB" id="9G8M">
    <property type="method" value="EM"/>
    <property type="resolution" value="3.30 A"/>
    <property type="chains" value="SR=1-135"/>
</dbReference>
<dbReference type="PDB" id="9G8O">
    <property type="method" value="EM"/>
    <property type="resolution" value="3.40 A"/>
    <property type="chains" value="SR=1-135"/>
</dbReference>
<dbReference type="PDBsum" id="4UG0"/>
<dbReference type="PDBsum" id="4V6X"/>
<dbReference type="PDBsum" id="5A2Q"/>
<dbReference type="PDBsum" id="5AJ0"/>
<dbReference type="PDBsum" id="5FLX"/>
<dbReference type="PDBsum" id="5LKS"/>
<dbReference type="PDBsum" id="5OA3"/>
<dbReference type="PDBsum" id="5T2C"/>
<dbReference type="PDBsum" id="5VYC"/>
<dbReference type="PDBsum" id="6FEC"/>
<dbReference type="PDBsum" id="6G18"/>
<dbReference type="PDBsum" id="6G4S"/>
<dbReference type="PDBsum" id="6G4W"/>
<dbReference type="PDBsum" id="6G51"/>
<dbReference type="PDBsum" id="6G53"/>
<dbReference type="PDBsum" id="6G5H"/>
<dbReference type="PDBsum" id="6G5I"/>
<dbReference type="PDBsum" id="6IP5"/>
<dbReference type="PDBsum" id="6IP6"/>
<dbReference type="PDBsum" id="6IP8"/>
<dbReference type="PDBsum" id="6OLE"/>
<dbReference type="PDBsum" id="6OLF"/>
<dbReference type="PDBsum" id="6OLG"/>
<dbReference type="PDBsum" id="6OLI"/>
<dbReference type="PDBsum" id="6OLZ"/>
<dbReference type="PDBsum" id="6OM0"/>
<dbReference type="PDBsum" id="6OM7"/>
<dbReference type="PDBsum" id="6QZP"/>
<dbReference type="PDBsum" id="6XA1"/>
<dbReference type="PDBsum" id="6Y0G"/>
<dbReference type="PDBsum" id="6Y2L"/>
<dbReference type="PDBsum" id="6Y57"/>
<dbReference type="PDBsum" id="6YBD"/>
<dbReference type="PDBsum" id="6YBS"/>
<dbReference type="PDBsum" id="6YBW"/>
<dbReference type="PDBsum" id="6Z6L"/>
<dbReference type="PDBsum" id="6Z6M"/>
<dbReference type="PDBsum" id="6Z6N"/>
<dbReference type="PDBsum" id="6ZLW"/>
<dbReference type="PDBsum" id="6ZM7"/>
<dbReference type="PDBsum" id="6ZME"/>
<dbReference type="PDBsum" id="6ZMI"/>
<dbReference type="PDBsum" id="6ZMO"/>
<dbReference type="PDBsum" id="6ZMT"/>
<dbReference type="PDBsum" id="6ZMW"/>
<dbReference type="PDBsum" id="6ZN5"/>
<dbReference type="PDBsum" id="6ZOJ"/>
<dbReference type="PDBsum" id="6ZOK"/>
<dbReference type="PDBsum" id="6ZOL"/>
<dbReference type="PDBsum" id="6ZON"/>
<dbReference type="PDBsum" id="6ZP4"/>
<dbReference type="PDBsum" id="6ZUO"/>
<dbReference type="PDBsum" id="6ZV6"/>
<dbReference type="PDBsum" id="6ZVH"/>
<dbReference type="PDBsum" id="6ZVJ"/>
<dbReference type="PDBsum" id="6ZXD"/>
<dbReference type="PDBsum" id="6ZXE"/>
<dbReference type="PDBsum" id="6ZXF"/>
<dbReference type="PDBsum" id="6ZXG"/>
<dbReference type="PDBsum" id="6ZXH"/>
<dbReference type="PDBsum" id="7A09"/>
<dbReference type="PDBsum" id="7K5I"/>
<dbReference type="PDBsum" id="7MQ8"/>
<dbReference type="PDBsum" id="7MQ9"/>
<dbReference type="PDBsum" id="7MQA"/>
<dbReference type="PDBsum" id="7QP6"/>
<dbReference type="PDBsum" id="7QP7"/>
<dbReference type="PDBsum" id="7QVP"/>
<dbReference type="PDBsum" id="7R4X"/>
<dbReference type="PDBsum" id="7TQL"/>
<dbReference type="PDBsum" id="7WTT"/>
<dbReference type="PDBsum" id="7WTU"/>
<dbReference type="PDBsum" id="7WTV"/>
<dbReference type="PDBsum" id="7WTW"/>
<dbReference type="PDBsum" id="7WTX"/>
<dbReference type="PDBsum" id="7WTZ"/>
<dbReference type="PDBsum" id="7WU0"/>
<dbReference type="PDBsum" id="7XNX"/>
<dbReference type="PDBsum" id="7XNY"/>
<dbReference type="PDBsum" id="8G5Y"/>
<dbReference type="PDBsum" id="8G5Z"/>
<dbReference type="PDBsum" id="8G60"/>
<dbReference type="PDBsum" id="8G61"/>
<dbReference type="PDBsum" id="8G6J"/>
<dbReference type="PDBsum" id="8GLP"/>
<dbReference type="PDBsum" id="8IFD"/>
<dbReference type="PDBsum" id="8IFE"/>
<dbReference type="PDBsum" id="8JDJ"/>
<dbReference type="PDBsum" id="8JDK"/>
<dbReference type="PDBsum" id="8JDL"/>
<dbReference type="PDBsum" id="8JDM"/>
<dbReference type="PDBsum" id="8K2C"/>
<dbReference type="PDBsum" id="8OZ0"/>
<dbReference type="PDBsum" id="8PJ1"/>
<dbReference type="PDBsum" id="8PJ2"/>
<dbReference type="PDBsum" id="8PJ3"/>
<dbReference type="PDBsum" id="8PJ4"/>
<dbReference type="PDBsum" id="8PJ5"/>
<dbReference type="PDBsum" id="8PJ6"/>
<dbReference type="PDBsum" id="8PPK"/>
<dbReference type="PDBsum" id="8PPL"/>
<dbReference type="PDBsum" id="8QOI"/>
<dbReference type="PDBsum" id="8RG0"/>
<dbReference type="PDBsum" id="8T4S"/>
<dbReference type="PDBsum" id="8UKB"/>
<dbReference type="PDBsum" id="8XP2"/>
<dbReference type="PDBsum" id="8XP3"/>
<dbReference type="PDBsum" id="8XSX"/>
<dbReference type="PDBsum" id="8XSY"/>
<dbReference type="PDBsum" id="8XSZ"/>
<dbReference type="PDBsum" id="8XXL"/>
<dbReference type="PDBsum" id="8XXM"/>
<dbReference type="PDBsum" id="8XXN"/>
<dbReference type="PDBsum" id="8Y0W"/>
<dbReference type="PDBsum" id="8Y0X"/>
<dbReference type="PDBsum" id="8YOO"/>
<dbReference type="PDBsum" id="8YOP"/>
<dbReference type="PDBsum" id="8ZDB"/>
<dbReference type="PDBsum" id="8ZDC"/>
<dbReference type="PDBsum" id="8ZDD"/>
<dbReference type="PDBsum" id="9BKD"/>
<dbReference type="PDBsum" id="9BLN"/>
<dbReference type="PDBsum" id="9C3H"/>
<dbReference type="PDBsum" id="9G8M"/>
<dbReference type="PDBsum" id="9G8O"/>
<dbReference type="EMDB" id="EMD-10668"/>
<dbReference type="EMDB" id="EMD-10674"/>
<dbReference type="EMDB" id="EMD-10690"/>
<dbReference type="EMDB" id="EMD-10769"/>
<dbReference type="EMDB" id="EMD-10772"/>
<dbReference type="EMDB" id="EMD-10775"/>
<dbReference type="EMDB" id="EMD-11098"/>
<dbReference type="EMDB" id="EMD-11099"/>
<dbReference type="EMDB" id="EMD-11100"/>
<dbReference type="EMDB" id="EMD-11276"/>
<dbReference type="EMDB" id="EMD-11288"/>
<dbReference type="EMDB" id="EMD-11289"/>
<dbReference type="EMDB" id="EMD-11292"/>
<dbReference type="EMDB" id="EMD-11299"/>
<dbReference type="EMDB" id="EMD-11301"/>
<dbReference type="EMDB" id="EMD-11302"/>
<dbReference type="EMDB" id="EMD-11310"/>
<dbReference type="EMDB" id="EMD-11320"/>
<dbReference type="EMDB" id="EMD-11321"/>
<dbReference type="EMDB" id="EMD-11322"/>
<dbReference type="EMDB" id="EMD-11325"/>
<dbReference type="EMDB" id="EMD-11335"/>
<dbReference type="EMDB" id="EMD-11440"/>
<dbReference type="EMDB" id="EMD-11441"/>
<dbReference type="EMDB" id="EMD-11456"/>
<dbReference type="EMDB" id="EMD-11458"/>
<dbReference type="EMDB" id="EMD-11517"/>
<dbReference type="EMDB" id="EMD-11518"/>
<dbReference type="EMDB" id="EMD-11519"/>
<dbReference type="EMDB" id="EMD-11520"/>
<dbReference type="EMDB" id="EMD-11521"/>
<dbReference type="EMDB" id="EMD-11602"/>
<dbReference type="EMDB" id="EMD-14113"/>
<dbReference type="EMDB" id="EMD-14114"/>
<dbReference type="EMDB" id="EMD-14181"/>
<dbReference type="EMDB" id="EMD-14317"/>
<dbReference type="EMDB" id="EMD-17297"/>
<dbReference type="EMDB" id="EMD-17696"/>
<dbReference type="EMDB" id="EMD-17697"/>
<dbReference type="EMDB" id="EMD-17698"/>
<dbReference type="EMDB" id="EMD-17699"/>
<dbReference type="EMDB" id="EMD-17700"/>
<dbReference type="EMDB" id="EMD-17701"/>
<dbReference type="EMDB" id="EMD-17804"/>
<dbReference type="EMDB" id="EMD-17805"/>
<dbReference type="EMDB" id="EMD-18539"/>
<dbReference type="EMDB" id="EMD-19128"/>
<dbReference type="EMDB" id="EMD-22681"/>
<dbReference type="EMDB" id="EMD-23936"/>
<dbReference type="EMDB" id="EMD-23937"/>
<dbReference type="EMDB" id="EMD-23938"/>
<dbReference type="EMDB" id="EMD-26067"/>
<dbReference type="EMDB" id="EMD-29757"/>
<dbReference type="EMDB" id="EMD-29758"/>
<dbReference type="EMDB" id="EMD-29759"/>
<dbReference type="EMDB" id="EMD-29760"/>
<dbReference type="EMDB" id="EMD-29771"/>
<dbReference type="EMDB" id="EMD-32800"/>
<dbReference type="EMDB" id="EMD-32801"/>
<dbReference type="EMDB" id="EMD-32802"/>
<dbReference type="EMDB" id="EMD-32803"/>
<dbReference type="EMDB" id="EMD-32804"/>
<dbReference type="EMDB" id="EMD-32806"/>
<dbReference type="EMDB" id="EMD-32807"/>
<dbReference type="EMDB" id="EMD-33329"/>
<dbReference type="EMDB" id="EMD-33330"/>
<dbReference type="EMDB" id="EMD-35413"/>
<dbReference type="EMDB" id="EMD-35414"/>
<dbReference type="EMDB" id="EMD-36178"/>
<dbReference type="EMDB" id="EMD-36179"/>
<dbReference type="EMDB" id="EMD-36180"/>
<dbReference type="EMDB" id="EMD-36181"/>
<dbReference type="EMDB" id="EMD-36838"/>
<dbReference type="EMDB" id="EMD-3770"/>
<dbReference type="EMDB" id="EMD-38548"/>
<dbReference type="EMDB" id="EMD-38549"/>
<dbReference type="EMDB" id="EMD-38629"/>
<dbReference type="EMDB" id="EMD-38630"/>
<dbReference type="EMDB" id="EMD-38631"/>
<dbReference type="EMDB" id="EMD-38752"/>
<dbReference type="EMDB" id="EMD-38753"/>
<dbReference type="EMDB" id="EMD-38754"/>
<dbReference type="EMDB" id="EMD-3883"/>
<dbReference type="EMDB" id="EMD-39455"/>
<dbReference type="EMDB" id="EMD-39456"/>
<dbReference type="EMDB" id="EMD-39956"/>
<dbReference type="EMDB" id="EMD-39957"/>
<dbReference type="EMDB" id="EMD-39958"/>
<dbReference type="EMDB" id="EMD-40205"/>
<dbReference type="EMDB" id="EMD-4070"/>
<dbReference type="EMDB" id="EMD-41039"/>
<dbReference type="EMDB" id="EMD-42351"/>
<dbReference type="EMDB" id="EMD-4242"/>
<dbReference type="EMDB" id="EMD-4337"/>
<dbReference type="EMDB" id="EMD-4348"/>
<dbReference type="EMDB" id="EMD-4349"/>
<dbReference type="EMDB" id="EMD-4350"/>
<dbReference type="EMDB" id="EMD-4351"/>
<dbReference type="EMDB" id="EMD-4352"/>
<dbReference type="EMDB" id="EMD-4353"/>
<dbReference type="EMDB" id="EMD-44641"/>
<dbReference type="EMDB" id="EMD-44671"/>
<dbReference type="EMDB" id="EMD-45170"/>
<dbReference type="EMDB" id="EMD-51132"/>
<dbReference type="EMDB" id="EMD-51134"/>
<dbReference type="EMDB" id="EMD-9701"/>
<dbReference type="EMDB" id="EMD-9702"/>
<dbReference type="EMDB" id="EMD-9703"/>
<dbReference type="SMR" id="P08708"/>
<dbReference type="BioGRID" id="112132">
    <property type="interactions" value="336"/>
</dbReference>
<dbReference type="ComplexPortal" id="CPX-5223">
    <property type="entry name" value="40S cytosolic small ribosomal subunit"/>
</dbReference>
<dbReference type="CORUM" id="P08708"/>
<dbReference type="FunCoup" id="P08708">
    <property type="interactions" value="1871"/>
</dbReference>
<dbReference type="IntAct" id="P08708">
    <property type="interactions" value="132"/>
</dbReference>
<dbReference type="MINT" id="P08708"/>
<dbReference type="STRING" id="9606.ENSP00000498019"/>
<dbReference type="DrugBank" id="DB11638">
    <property type="generic name" value="Artenimol"/>
</dbReference>
<dbReference type="GlyGen" id="P08708">
    <property type="glycosylation" value="2 sites, 1 O-linked glycan (1 site)"/>
</dbReference>
<dbReference type="iPTMnet" id="P08708"/>
<dbReference type="MetOSite" id="P08708"/>
<dbReference type="PhosphoSitePlus" id="P08708"/>
<dbReference type="SwissPalm" id="P08708"/>
<dbReference type="BioMuta" id="RPS17"/>
<dbReference type="DMDM" id="338819320"/>
<dbReference type="jPOST" id="P08708"/>
<dbReference type="MassIVE" id="P08708"/>
<dbReference type="PaxDb" id="9606-ENSP00000346046"/>
<dbReference type="PeptideAtlas" id="P08708"/>
<dbReference type="Pumba" id="P08708"/>
<dbReference type="TopDownProteomics" id="P08708"/>
<dbReference type="Antibodypedia" id="56676">
    <property type="antibodies" value="148 antibodies from 26 providers"/>
</dbReference>
<dbReference type="DNASU" id="6218"/>
<dbReference type="Ensembl" id="ENST00000617731.2">
    <property type="protein sequence ID" value="ENSP00000483755.1"/>
    <property type="gene ID" value="ENSG00000278229.2"/>
</dbReference>
<dbReference type="Ensembl" id="ENST00000647841.1">
    <property type="protein sequence ID" value="ENSP00000498019.1"/>
    <property type="gene ID" value="ENSG00000182774.13"/>
</dbReference>
<dbReference type="GeneID" id="6218"/>
<dbReference type="KEGG" id="hsa:6218"/>
<dbReference type="MANE-Select" id="ENST00000647841.1">
    <property type="protein sequence ID" value="ENSP00000498019.1"/>
    <property type="RefSeq nucleotide sequence ID" value="NM_001021.6"/>
    <property type="RefSeq protein sequence ID" value="NP_001012.1"/>
</dbReference>
<dbReference type="AGR" id="HGNC:10397"/>
<dbReference type="CTD" id="6218"/>
<dbReference type="DisGeNET" id="6218"/>
<dbReference type="GeneCards" id="RPS17"/>
<dbReference type="GeneReviews" id="RPS17"/>
<dbReference type="HGNC" id="HGNC:10397">
    <property type="gene designation" value="RPS17"/>
</dbReference>
<dbReference type="HPA" id="ENSG00000182774">
    <property type="expression patterns" value="Low tissue specificity"/>
</dbReference>
<dbReference type="MalaCards" id="RPS17"/>
<dbReference type="MIM" id="180472">
    <property type="type" value="gene"/>
</dbReference>
<dbReference type="MIM" id="612527">
    <property type="type" value="phenotype"/>
</dbReference>
<dbReference type="neXtProt" id="NX_P08708"/>
<dbReference type="OpenTargets" id="ENSG00000182774"/>
<dbReference type="Orphanet" id="124">
    <property type="disease" value="Diamond-Blackfan anemia"/>
</dbReference>
<dbReference type="PharmGKB" id="PA34797"/>
<dbReference type="VEuPathDB" id="HostDB:ENSG00000182774"/>
<dbReference type="eggNOG" id="KOG0187">
    <property type="taxonomic scope" value="Eukaryota"/>
</dbReference>
<dbReference type="GeneTree" id="ENSGT00390000006548"/>
<dbReference type="HOGENOM" id="CLU_112958_1_1_1"/>
<dbReference type="InParanoid" id="P08708"/>
<dbReference type="OMA" id="HTEHIEV"/>
<dbReference type="OrthoDB" id="9523113at2759"/>
<dbReference type="PAN-GO" id="P08708">
    <property type="GO annotations" value="0 GO annotations based on evolutionary models"/>
</dbReference>
<dbReference type="PhylomeDB" id="P08708"/>
<dbReference type="TreeFam" id="TF317992"/>
<dbReference type="PathwayCommons" id="P08708"/>
<dbReference type="Reactome" id="R-HSA-156827">
    <property type="pathway name" value="L13a-mediated translational silencing of Ceruloplasmin expression"/>
</dbReference>
<dbReference type="Reactome" id="R-HSA-156902">
    <property type="pathway name" value="Peptide chain elongation"/>
</dbReference>
<dbReference type="Reactome" id="R-HSA-1799339">
    <property type="pathway name" value="SRP-dependent cotranslational protein targeting to membrane"/>
</dbReference>
<dbReference type="Reactome" id="R-HSA-192823">
    <property type="pathway name" value="Viral mRNA Translation"/>
</dbReference>
<dbReference type="Reactome" id="R-HSA-2408557">
    <property type="pathway name" value="Selenocysteine synthesis"/>
</dbReference>
<dbReference type="Reactome" id="R-HSA-6791226">
    <property type="pathway name" value="Major pathway of rRNA processing in the nucleolus and cytosol"/>
</dbReference>
<dbReference type="Reactome" id="R-HSA-72649">
    <property type="pathway name" value="Translation initiation complex formation"/>
</dbReference>
<dbReference type="Reactome" id="R-HSA-72689">
    <property type="pathway name" value="Formation of a pool of free 40S subunits"/>
</dbReference>
<dbReference type="Reactome" id="R-HSA-72695">
    <property type="pathway name" value="Formation of the ternary complex, and subsequently, the 43S complex"/>
</dbReference>
<dbReference type="Reactome" id="R-HSA-72702">
    <property type="pathway name" value="Ribosomal scanning and start codon recognition"/>
</dbReference>
<dbReference type="Reactome" id="R-HSA-72706">
    <property type="pathway name" value="GTP hydrolysis and joining of the 60S ribosomal subunit"/>
</dbReference>
<dbReference type="Reactome" id="R-HSA-72764">
    <property type="pathway name" value="Eukaryotic Translation Termination"/>
</dbReference>
<dbReference type="Reactome" id="R-HSA-9010553">
    <property type="pathway name" value="Regulation of expression of SLITs and ROBOs"/>
</dbReference>
<dbReference type="Reactome" id="R-HSA-9633012">
    <property type="pathway name" value="Response of EIF2AK4 (GCN2) to amino acid deficiency"/>
</dbReference>
<dbReference type="Reactome" id="R-HSA-9735869">
    <property type="pathway name" value="SARS-CoV-1 modulates host translation machinery"/>
</dbReference>
<dbReference type="Reactome" id="R-HSA-9754678">
    <property type="pathway name" value="SARS-CoV-2 modulates host translation machinery"/>
</dbReference>
<dbReference type="Reactome" id="R-HSA-975956">
    <property type="pathway name" value="Nonsense Mediated Decay (NMD) independent of the Exon Junction Complex (EJC)"/>
</dbReference>
<dbReference type="Reactome" id="R-HSA-975957">
    <property type="pathway name" value="Nonsense Mediated Decay (NMD) enhanced by the Exon Junction Complex (EJC)"/>
</dbReference>
<dbReference type="SignaLink" id="P08708"/>
<dbReference type="SIGNOR" id="P08708"/>
<dbReference type="BioGRID-ORCS" id="6218">
    <property type="hits" value="418 hits in 698 CRISPR screens"/>
</dbReference>
<dbReference type="CD-CODE" id="232F8A39">
    <property type="entry name" value="P-body"/>
</dbReference>
<dbReference type="CD-CODE" id="91857CE7">
    <property type="entry name" value="Nucleolus"/>
</dbReference>
<dbReference type="ChiTaRS" id="RPS17">
    <property type="organism name" value="human"/>
</dbReference>
<dbReference type="GeneWiki" id="RPS17"/>
<dbReference type="GenomeRNAi" id="6218"/>
<dbReference type="Pharos" id="P08708">
    <property type="development level" value="Tbio"/>
</dbReference>
<dbReference type="PRO" id="PR:P08708"/>
<dbReference type="Proteomes" id="UP000005640">
    <property type="component" value="Chromosome 15"/>
</dbReference>
<dbReference type="RNAct" id="P08708">
    <property type="molecule type" value="protein"/>
</dbReference>
<dbReference type="Bgee" id="ENSG00000182774">
    <property type="expression patterns" value="Expressed in ganglionic eminence and 98 other cell types or tissues"/>
</dbReference>
<dbReference type="ExpressionAtlas" id="P08708">
    <property type="expression patterns" value="baseline and differential"/>
</dbReference>
<dbReference type="GO" id="GO:0005737">
    <property type="term" value="C:cytoplasm"/>
    <property type="evidence" value="ECO:0000303"/>
    <property type="project" value="ComplexPortal"/>
</dbReference>
<dbReference type="GO" id="GO:0005829">
    <property type="term" value="C:cytosol"/>
    <property type="evidence" value="ECO:0000304"/>
    <property type="project" value="Reactome"/>
</dbReference>
<dbReference type="GO" id="GO:0022626">
    <property type="term" value="C:cytosolic ribosome"/>
    <property type="evidence" value="ECO:0000314"/>
    <property type="project" value="FlyBase"/>
</dbReference>
<dbReference type="GO" id="GO:0022627">
    <property type="term" value="C:cytosolic small ribosomal subunit"/>
    <property type="evidence" value="ECO:0000314"/>
    <property type="project" value="UniProtKB"/>
</dbReference>
<dbReference type="GO" id="GO:0005925">
    <property type="term" value="C:focal adhesion"/>
    <property type="evidence" value="ECO:0007005"/>
    <property type="project" value="UniProtKB"/>
</dbReference>
<dbReference type="GO" id="GO:0016020">
    <property type="term" value="C:membrane"/>
    <property type="evidence" value="ECO:0007005"/>
    <property type="project" value="UniProtKB"/>
</dbReference>
<dbReference type="GO" id="GO:0005730">
    <property type="term" value="C:nucleolus"/>
    <property type="evidence" value="ECO:0007669"/>
    <property type="project" value="UniProtKB-SubCell"/>
</dbReference>
<dbReference type="GO" id="GO:0005654">
    <property type="term" value="C:nucleoplasm"/>
    <property type="evidence" value="ECO:0000304"/>
    <property type="project" value="Reactome"/>
</dbReference>
<dbReference type="GO" id="GO:0005840">
    <property type="term" value="C:ribosome"/>
    <property type="evidence" value="ECO:0000303"/>
    <property type="project" value="UniProtKB"/>
</dbReference>
<dbReference type="GO" id="GO:0032040">
    <property type="term" value="C:small-subunit processome"/>
    <property type="evidence" value="ECO:0000314"/>
    <property type="project" value="UniProtKB"/>
</dbReference>
<dbReference type="GO" id="GO:0003723">
    <property type="term" value="F:RNA binding"/>
    <property type="evidence" value="ECO:0007005"/>
    <property type="project" value="UniProtKB"/>
</dbReference>
<dbReference type="GO" id="GO:0003735">
    <property type="term" value="F:structural constituent of ribosome"/>
    <property type="evidence" value="ECO:0000314"/>
    <property type="project" value="FlyBase"/>
</dbReference>
<dbReference type="GO" id="GO:0002181">
    <property type="term" value="P:cytoplasmic translation"/>
    <property type="evidence" value="ECO:0000303"/>
    <property type="project" value="ComplexPortal"/>
</dbReference>
<dbReference type="GO" id="GO:0034101">
    <property type="term" value="P:erythrocyte homeostasis"/>
    <property type="evidence" value="ECO:0000315"/>
    <property type="project" value="UniProtKB"/>
</dbReference>
<dbReference type="GO" id="GO:0042274">
    <property type="term" value="P:ribosomal small subunit biogenesis"/>
    <property type="evidence" value="ECO:0000314"/>
    <property type="project" value="UniProtKB"/>
</dbReference>
<dbReference type="GO" id="GO:0006364">
    <property type="term" value="P:rRNA processing"/>
    <property type="evidence" value="ECO:0000315"/>
    <property type="project" value="UniProtKB"/>
</dbReference>
<dbReference type="GO" id="GO:0006412">
    <property type="term" value="P:translation"/>
    <property type="evidence" value="ECO:0000305"/>
    <property type="project" value="UniProtKB"/>
</dbReference>
<dbReference type="GO" id="GO:0006413">
    <property type="term" value="P:translational initiation"/>
    <property type="evidence" value="ECO:0000303"/>
    <property type="project" value="UniProtKB"/>
</dbReference>
<dbReference type="FunFam" id="1.10.60.20:FF:000001">
    <property type="entry name" value="40S ribosomal protein S17"/>
    <property type="match status" value="1"/>
</dbReference>
<dbReference type="Gene3D" id="1.10.60.20">
    <property type="entry name" value="Ribosomal protein S17e-like"/>
    <property type="match status" value="1"/>
</dbReference>
<dbReference type="HAMAP" id="MF_00511">
    <property type="entry name" value="Ribosomal_eS17"/>
    <property type="match status" value="1"/>
</dbReference>
<dbReference type="InterPro" id="IPR001210">
    <property type="entry name" value="Ribosomal_eS17"/>
</dbReference>
<dbReference type="InterPro" id="IPR018273">
    <property type="entry name" value="Ribosomal_eS17_CS"/>
</dbReference>
<dbReference type="InterPro" id="IPR036401">
    <property type="entry name" value="Ribosomal_eS17_sf"/>
</dbReference>
<dbReference type="NCBIfam" id="NF002242">
    <property type="entry name" value="PRK01151.1"/>
    <property type="match status" value="1"/>
</dbReference>
<dbReference type="PANTHER" id="PTHR10732">
    <property type="entry name" value="40S RIBOSOMAL PROTEIN S17"/>
    <property type="match status" value="1"/>
</dbReference>
<dbReference type="PANTHER" id="PTHR10732:SF0">
    <property type="entry name" value="40S RIBOSOMAL PROTEIN S17"/>
    <property type="match status" value="1"/>
</dbReference>
<dbReference type="Pfam" id="PF00833">
    <property type="entry name" value="Ribosomal_S17e"/>
    <property type="match status" value="1"/>
</dbReference>
<dbReference type="SUPFAM" id="SSF116820">
    <property type="entry name" value="Rps17e-like"/>
    <property type="match status" value="1"/>
</dbReference>
<dbReference type="PROSITE" id="PS00712">
    <property type="entry name" value="RIBOSOMAL_S17E"/>
    <property type="match status" value="1"/>
</dbReference>
<accession>P08708</accession>
<accession>B2R4U4</accession>
<accession>P0CW22</accession>
<comment type="function">
    <text evidence="4 5">Component of the small ribosomal subunit (PubMed:23636399). The ribosome is a large ribonucleoprotein complex responsible for the synthesis of proteins in the cell (PubMed:23636399). Part of the small subunit (SSU) processome, first precursor of the small eukaryotic ribosomal subunit. During the assembly of the SSU processome in the nucleolus, many ribosome biogenesis factors, an RNA chaperone and ribosomal proteins associate with the nascent pre-rRNA and work in concert to generate RNA folding, modifications, rearrangements and cleavage as well as targeted degradation of pre-ribosomal RNA by the RNA exosome (PubMed:34516797).</text>
</comment>
<comment type="subunit">
    <text evidence="4 5">Component of the small ribosomal subunit (PubMed:23636399). Part of the small subunit (SSU) processome, composed of more than 70 proteins and the RNA chaperone small nucleolar RNA (snoRNA) U3 (PubMed:34516797).</text>
</comment>
<comment type="subcellular location">
    <subcellularLocation>
        <location evidence="4">Cytoplasm</location>
    </subcellularLocation>
    <subcellularLocation>
        <location evidence="5">Nucleus</location>
        <location evidence="5">Nucleolus</location>
    </subcellularLocation>
</comment>
<comment type="PTM">
    <text evidence="6">Ubiquitinated at Lys-103 by RNF14 and RNF25 in response to ribosome collisions (ribosome stalling).</text>
</comment>
<comment type="disease" evidence="2 3">
    <disease id="DI-00394">
        <name>Diamond-Blackfan anemia 4</name>
        <acronym>DBA4</acronym>
        <description>A form of Diamond-Blackfan anemia, a congenital non-regenerative hypoplastic anemia that usually presents early in infancy. Diamond-Blackfan anemia is characterized by a moderate to severe macrocytic anemia, erythroblastopenia, and an increased risk of developing leukemia. 30 to 40% of Diamond-Blackfan anemia patients present with short stature and congenital anomalies, the most frequent being craniofacial (Pierre-Robin syndrome and cleft palate), thumb and urogenital anomalies.</description>
        <dbReference type="MIM" id="612527"/>
    </disease>
    <text>The disease is caused by variants affecting the gene represented in this entry.</text>
</comment>
<comment type="similarity">
    <text evidence="9">Belongs to the eukaryotic ribosomal protein eS17 family.</text>
</comment>
<evidence type="ECO:0000250" key="1">
    <source>
        <dbReference type="UniProtKB" id="P63276"/>
    </source>
</evidence>
<evidence type="ECO:0000269" key="2">
    <source>
    </source>
</evidence>
<evidence type="ECO:0000269" key="3">
    <source>
    </source>
</evidence>
<evidence type="ECO:0000269" key="4">
    <source>
    </source>
</evidence>
<evidence type="ECO:0000269" key="5">
    <source>
    </source>
</evidence>
<evidence type="ECO:0000269" key="6">
    <source>
    </source>
</evidence>
<evidence type="ECO:0000269" key="7">
    <source>
    </source>
</evidence>
<evidence type="ECO:0000303" key="8">
    <source>
    </source>
</evidence>
<evidence type="ECO:0000305" key="9"/>
<evidence type="ECO:0000312" key="10">
    <source>
        <dbReference type="HGNC" id="HGNC:10397"/>
    </source>
</evidence>
<evidence type="ECO:0007744" key="11">
    <source>
        <dbReference type="PDB" id="7MQ8"/>
    </source>
</evidence>
<evidence type="ECO:0007744" key="12">
    <source>
        <dbReference type="PDB" id="7MQ9"/>
    </source>
</evidence>
<evidence type="ECO:0007744" key="13">
    <source>
        <dbReference type="PDB" id="7MQA"/>
    </source>
</evidence>
<evidence type="ECO:0007744" key="14">
    <source>
    </source>
</evidence>
<evidence type="ECO:0007744" key="15">
    <source>
    </source>
</evidence>
<evidence type="ECO:0007744" key="16">
    <source>
    </source>
</evidence>
<evidence type="ECO:0007744" key="17">
    <source>
    </source>
</evidence>
<evidence type="ECO:0007744" key="18">
    <source>
    </source>
</evidence>
<evidence type="ECO:0007744" key="19">
    <source>
    </source>
</evidence>
<evidence type="ECO:0007744" key="20">
    <source>
    </source>
</evidence>
<evidence type="ECO:0007829" key="21">
    <source>
        <dbReference type="PDB" id="6ZV6"/>
    </source>
</evidence>
<evidence type="ECO:0007829" key="22">
    <source>
        <dbReference type="PDB" id="7R4X"/>
    </source>
</evidence>
<feature type="initiator methionine" description="Removed" evidence="7">
    <location>
        <position position="1"/>
    </location>
</feature>
<feature type="chain" id="PRO_0000141525" description="Small ribosomal subunit protein eS17">
    <location>
        <begin position="2"/>
        <end position="135"/>
    </location>
</feature>
<feature type="modified residue" description="N6-succinyllysine" evidence="1">
    <location>
        <position position="19"/>
    </location>
</feature>
<feature type="modified residue" description="Phosphoserine" evidence="14 15 16 17 18">
    <location>
        <position position="113"/>
    </location>
</feature>
<feature type="modified residue" description="Phosphothreonine" evidence="14 16">
    <location>
        <position position="130"/>
    </location>
</feature>
<feature type="cross-link" description="Glycyl lysine isopeptide (Lys-Gly) (interchain with G-Cter in SUMO1); alternate" evidence="19">
    <location>
        <position position="103"/>
    </location>
</feature>
<feature type="cross-link" description="Glycyl lysine isopeptide (Lys-Gly) (interchain with G-Cter in SUMO2); alternate" evidence="6 20">
    <location>
        <position position="103"/>
    </location>
</feature>
<feature type="sequence variant" id="VAR_034478" description="In dbSNP:rs1043734.">
    <original>E</original>
    <variation>K</variation>
    <location>
        <position position="36"/>
    </location>
</feature>
<feature type="helix" evidence="22">
    <location>
        <begin position="7"/>
        <end position="20"/>
    </location>
</feature>
<feature type="helix" evidence="22">
    <location>
        <begin position="21"/>
        <end position="23"/>
    </location>
</feature>
<feature type="helix" evidence="22">
    <location>
        <begin position="28"/>
        <end position="37"/>
    </location>
</feature>
<feature type="strand" evidence="22">
    <location>
        <begin position="38"/>
        <end position="40"/>
    </location>
</feature>
<feature type="helix" evidence="22">
    <location>
        <begin position="44"/>
        <end position="61"/>
    </location>
</feature>
<feature type="turn" evidence="22">
    <location>
        <begin position="72"/>
        <end position="74"/>
    </location>
</feature>
<feature type="helix" evidence="22">
    <location>
        <begin position="75"/>
        <end position="81"/>
    </location>
</feature>
<feature type="strand" evidence="21">
    <location>
        <begin position="90"/>
        <end position="92"/>
    </location>
</feature>
<feature type="strand" evidence="22">
    <location>
        <begin position="94"/>
        <end position="98"/>
    </location>
</feature>
<feature type="helix" evidence="22">
    <location>
        <begin position="100"/>
        <end position="107"/>
    </location>
</feature>
<feature type="turn" evidence="22">
    <location>
        <begin position="108"/>
        <end position="110"/>
    </location>
</feature>
<feature type="strand" evidence="22">
    <location>
        <begin position="115"/>
        <end position="119"/>
    </location>
</feature>
<name>RS17_HUMAN</name>
<reference key="1">
    <citation type="journal article" date="1986" name="Proc. Natl. Acad. Sci. U.S.A.">
        <title>Homologous ribosomal proteins in bacteria, yeast, and humans.</title>
        <authorList>
            <person name="Chen I.-T."/>
            <person name="Dixit A."/>
            <person name="Rhoads D.D."/>
            <person name="Roufa D.J."/>
        </authorList>
    </citation>
    <scope>NUCLEOTIDE SEQUENCE [MRNA]</scope>
</reference>
<reference key="2">
    <citation type="journal article" date="1988" name="Gene">
        <title>The transcriptionally active human ribosomal protein S17 gene.</title>
        <authorList>
            <person name="Chen I.-T."/>
            <person name="Roufa D.J."/>
        </authorList>
    </citation>
    <scope>NUCLEOTIDE SEQUENCE [GENOMIC DNA]</scope>
</reference>
<reference key="3">
    <citation type="journal article" date="2004" name="Nat. Genet.">
        <title>Complete sequencing and characterization of 21,243 full-length human cDNAs.</title>
        <authorList>
            <person name="Ota T."/>
            <person name="Suzuki Y."/>
            <person name="Nishikawa T."/>
            <person name="Otsuki T."/>
            <person name="Sugiyama T."/>
            <person name="Irie R."/>
            <person name="Wakamatsu A."/>
            <person name="Hayashi K."/>
            <person name="Sato H."/>
            <person name="Nagai K."/>
            <person name="Kimura K."/>
            <person name="Makita H."/>
            <person name="Sekine M."/>
            <person name="Obayashi M."/>
            <person name="Nishi T."/>
            <person name="Shibahara T."/>
            <person name="Tanaka T."/>
            <person name="Ishii S."/>
            <person name="Yamamoto J."/>
            <person name="Saito K."/>
            <person name="Kawai Y."/>
            <person name="Isono Y."/>
            <person name="Nakamura Y."/>
            <person name="Nagahari K."/>
            <person name="Murakami K."/>
            <person name="Yasuda T."/>
            <person name="Iwayanagi T."/>
            <person name="Wagatsuma M."/>
            <person name="Shiratori A."/>
            <person name="Sudo H."/>
            <person name="Hosoiri T."/>
            <person name="Kaku Y."/>
            <person name="Kodaira H."/>
            <person name="Kondo H."/>
            <person name="Sugawara M."/>
            <person name="Takahashi M."/>
            <person name="Kanda K."/>
            <person name="Yokoi T."/>
            <person name="Furuya T."/>
            <person name="Kikkawa E."/>
            <person name="Omura Y."/>
            <person name="Abe K."/>
            <person name="Kamihara K."/>
            <person name="Katsuta N."/>
            <person name="Sato K."/>
            <person name="Tanikawa M."/>
            <person name="Yamazaki M."/>
            <person name="Ninomiya K."/>
            <person name="Ishibashi T."/>
            <person name="Yamashita H."/>
            <person name="Murakawa K."/>
            <person name="Fujimori K."/>
            <person name="Tanai H."/>
            <person name="Kimata M."/>
            <person name="Watanabe M."/>
            <person name="Hiraoka S."/>
            <person name="Chiba Y."/>
            <person name="Ishida S."/>
            <person name="Ono Y."/>
            <person name="Takiguchi S."/>
            <person name="Watanabe S."/>
            <person name="Yosida M."/>
            <person name="Hotuta T."/>
            <person name="Kusano J."/>
            <person name="Kanehori K."/>
            <person name="Takahashi-Fujii A."/>
            <person name="Hara H."/>
            <person name="Tanase T.-O."/>
            <person name="Nomura Y."/>
            <person name="Togiya S."/>
            <person name="Komai F."/>
            <person name="Hara R."/>
            <person name="Takeuchi K."/>
            <person name="Arita M."/>
            <person name="Imose N."/>
            <person name="Musashino K."/>
            <person name="Yuuki H."/>
            <person name="Oshima A."/>
            <person name="Sasaki N."/>
            <person name="Aotsuka S."/>
            <person name="Yoshikawa Y."/>
            <person name="Matsunawa H."/>
            <person name="Ichihara T."/>
            <person name="Shiohata N."/>
            <person name="Sano S."/>
            <person name="Moriya S."/>
            <person name="Momiyama H."/>
            <person name="Satoh N."/>
            <person name="Takami S."/>
            <person name="Terashima Y."/>
            <person name="Suzuki O."/>
            <person name="Nakagawa S."/>
            <person name="Senoh A."/>
            <person name="Mizoguchi H."/>
            <person name="Goto Y."/>
            <person name="Shimizu F."/>
            <person name="Wakebe H."/>
            <person name="Hishigaki H."/>
            <person name="Watanabe T."/>
            <person name="Sugiyama A."/>
            <person name="Takemoto M."/>
            <person name="Kawakami B."/>
            <person name="Yamazaki M."/>
            <person name="Watanabe K."/>
            <person name="Kumagai A."/>
            <person name="Itakura S."/>
            <person name="Fukuzumi Y."/>
            <person name="Fujimori Y."/>
            <person name="Komiyama M."/>
            <person name="Tashiro H."/>
            <person name="Tanigami A."/>
            <person name="Fujiwara T."/>
            <person name="Ono T."/>
            <person name="Yamada K."/>
            <person name="Fujii Y."/>
            <person name="Ozaki K."/>
            <person name="Hirao M."/>
            <person name="Ohmori Y."/>
            <person name="Kawabata A."/>
            <person name="Hikiji T."/>
            <person name="Kobatake N."/>
            <person name="Inagaki H."/>
            <person name="Ikema Y."/>
            <person name="Okamoto S."/>
            <person name="Okitani R."/>
            <person name="Kawakami T."/>
            <person name="Noguchi S."/>
            <person name="Itoh T."/>
            <person name="Shigeta K."/>
            <person name="Senba T."/>
            <person name="Matsumura K."/>
            <person name="Nakajima Y."/>
            <person name="Mizuno T."/>
            <person name="Morinaga M."/>
            <person name="Sasaki M."/>
            <person name="Togashi T."/>
            <person name="Oyama M."/>
            <person name="Hata H."/>
            <person name="Watanabe M."/>
            <person name="Komatsu T."/>
            <person name="Mizushima-Sugano J."/>
            <person name="Satoh T."/>
            <person name="Shirai Y."/>
            <person name="Takahashi Y."/>
            <person name="Nakagawa K."/>
            <person name="Okumura K."/>
            <person name="Nagase T."/>
            <person name="Nomura N."/>
            <person name="Kikuchi H."/>
            <person name="Masuho Y."/>
            <person name="Yamashita R."/>
            <person name="Nakai K."/>
            <person name="Yada T."/>
            <person name="Nakamura Y."/>
            <person name="Ohara O."/>
            <person name="Isogai T."/>
            <person name="Sugano S."/>
        </authorList>
    </citation>
    <scope>NUCLEOTIDE SEQUENCE [LARGE SCALE MRNA]</scope>
    <source>
        <tissue>Thymus</tissue>
    </source>
</reference>
<reference key="4">
    <citation type="journal article" date="2006" name="Nature">
        <title>Analysis of the DNA sequence and duplication history of human chromosome 15.</title>
        <authorList>
            <person name="Zody M.C."/>
            <person name="Garber M."/>
            <person name="Sharpe T."/>
            <person name="Young S.K."/>
            <person name="Rowen L."/>
            <person name="O'Neill K."/>
            <person name="Whittaker C.A."/>
            <person name="Kamal M."/>
            <person name="Chang J.L."/>
            <person name="Cuomo C.A."/>
            <person name="Dewar K."/>
            <person name="FitzGerald M.G."/>
            <person name="Kodira C.D."/>
            <person name="Madan A."/>
            <person name="Qin S."/>
            <person name="Yang X."/>
            <person name="Abbasi N."/>
            <person name="Abouelleil A."/>
            <person name="Arachchi H.M."/>
            <person name="Baradarani L."/>
            <person name="Birditt B."/>
            <person name="Bloom S."/>
            <person name="Bloom T."/>
            <person name="Borowsky M.L."/>
            <person name="Burke J."/>
            <person name="Butler J."/>
            <person name="Cook A."/>
            <person name="DeArellano K."/>
            <person name="DeCaprio D."/>
            <person name="Dorris L. III"/>
            <person name="Dors M."/>
            <person name="Eichler E.E."/>
            <person name="Engels R."/>
            <person name="Fahey J."/>
            <person name="Fleetwood P."/>
            <person name="Friedman C."/>
            <person name="Gearin G."/>
            <person name="Hall J.L."/>
            <person name="Hensley G."/>
            <person name="Johnson E."/>
            <person name="Jones C."/>
            <person name="Kamat A."/>
            <person name="Kaur A."/>
            <person name="Locke D.P."/>
            <person name="Madan A."/>
            <person name="Munson G."/>
            <person name="Jaffe D.B."/>
            <person name="Lui A."/>
            <person name="Macdonald P."/>
            <person name="Mauceli E."/>
            <person name="Naylor J.W."/>
            <person name="Nesbitt R."/>
            <person name="Nicol R."/>
            <person name="O'Leary S.B."/>
            <person name="Ratcliffe A."/>
            <person name="Rounsley S."/>
            <person name="She X."/>
            <person name="Sneddon K.M.B."/>
            <person name="Stewart S."/>
            <person name="Sougnez C."/>
            <person name="Stone S.M."/>
            <person name="Topham K."/>
            <person name="Vincent D."/>
            <person name="Wang S."/>
            <person name="Zimmer A.R."/>
            <person name="Birren B.W."/>
            <person name="Hood L."/>
            <person name="Lander E.S."/>
            <person name="Nusbaum C."/>
        </authorList>
    </citation>
    <scope>NUCLEOTIDE SEQUENCE [LARGE SCALE GENOMIC DNA]</scope>
</reference>
<reference key="5">
    <citation type="submission" date="2005-07" db="EMBL/GenBank/DDBJ databases">
        <authorList>
            <person name="Mural R.J."/>
            <person name="Istrail S."/>
            <person name="Sutton G.G."/>
            <person name="Florea L."/>
            <person name="Halpern A.L."/>
            <person name="Mobarry C.M."/>
            <person name="Lippert R."/>
            <person name="Walenz B."/>
            <person name="Shatkay H."/>
            <person name="Dew I."/>
            <person name="Miller J.R."/>
            <person name="Flanigan M.J."/>
            <person name="Edwards N.J."/>
            <person name="Bolanos R."/>
            <person name="Fasulo D."/>
            <person name="Halldorsson B.V."/>
            <person name="Hannenhalli S."/>
            <person name="Turner R."/>
            <person name="Yooseph S."/>
            <person name="Lu F."/>
            <person name="Nusskern D.R."/>
            <person name="Shue B.C."/>
            <person name="Zheng X.H."/>
            <person name="Zhong F."/>
            <person name="Delcher A.L."/>
            <person name="Huson D.H."/>
            <person name="Kravitz S.A."/>
            <person name="Mouchard L."/>
            <person name="Reinert K."/>
            <person name="Remington K.A."/>
            <person name="Clark A.G."/>
            <person name="Waterman M.S."/>
            <person name="Eichler E.E."/>
            <person name="Adams M.D."/>
            <person name="Hunkapiller M.W."/>
            <person name="Myers E.W."/>
            <person name="Venter J.C."/>
        </authorList>
    </citation>
    <scope>NUCLEOTIDE SEQUENCE [LARGE SCALE GENOMIC DNA]</scope>
</reference>
<reference key="6">
    <citation type="journal article" date="2004" name="Genome Res.">
        <title>The status, quality, and expansion of the NIH full-length cDNA project: the Mammalian Gene Collection (MGC).</title>
        <authorList>
            <consortium name="The MGC Project Team"/>
        </authorList>
    </citation>
    <scope>NUCLEOTIDE SEQUENCE [LARGE SCALE MRNA]</scope>
    <source>
        <tissue>B-cell</tissue>
        <tissue>Kidney</tissue>
        <tissue>Lung</tissue>
        <tissue>Pancreas</tissue>
        <tissue>Prostate</tissue>
        <tissue>Salivary gland</tissue>
    </source>
</reference>
<reference key="7">
    <citation type="journal article" date="1996" name="Eur. J. Biochem.">
        <title>Characterization of the human small-ribosomal-subunit proteins by N-terminal and internal sequencing, and mass spectrometry.</title>
        <authorList>
            <person name="Vladimirov S.N."/>
            <person name="Ivanov A.V."/>
            <person name="Karpova G.G."/>
            <person name="Musolyamov A.K."/>
            <person name="Egorov T.A."/>
            <person name="Thiede B."/>
            <person name="Wittmann-Liebold B."/>
            <person name="Otto A."/>
        </authorList>
    </citation>
    <scope>PROTEIN SEQUENCE OF 2-16</scope>
    <source>
        <tissue>Placenta</tissue>
    </source>
</reference>
<reference key="8">
    <citation type="journal article" date="2007" name="Hum. Mutat.">
        <title>Ribosomal protein S17 gene (RPS17) is mutated in Diamond-Blackfan anemia.</title>
        <authorList>
            <person name="Cmejla R."/>
            <person name="Cmejlova J."/>
            <person name="Handrkova H."/>
            <person name="Petrak J."/>
            <person name="Pospisilova D."/>
        </authorList>
    </citation>
    <scope>INVOLVEMENT IN DBA4</scope>
</reference>
<reference key="9">
    <citation type="journal article" date="2008" name="Am. J. Hum. Genet.">
        <title>Ribosomal protein L5 and L11 mutations are associated with cleft palate and abnormal thumbs in Diamond-Blackfan anemia patients.</title>
        <authorList>
            <person name="Gazda H.T."/>
            <person name="Sheen M.R."/>
            <person name="Vlachos A."/>
            <person name="Choesmel V."/>
            <person name="O'Donohue M.-F."/>
            <person name="Schneider H."/>
            <person name="Darras N."/>
            <person name="Hasman C."/>
            <person name="Sieff C.A."/>
            <person name="Newburger P.E."/>
            <person name="Ball S.E."/>
            <person name="Niewiadomska E."/>
            <person name="Matysiak M."/>
            <person name="Zaucha J.M."/>
            <person name="Glader B."/>
            <person name="Niemeyer C."/>
            <person name="Meerpohl J.J."/>
            <person name="Atsidaftos E."/>
            <person name="Lipton J.M."/>
            <person name="Gleizes P.-E."/>
            <person name="Beggs A.H."/>
        </authorList>
    </citation>
    <scope>INVOLVEMENT IN DBA4</scope>
</reference>
<reference key="10">
    <citation type="journal article" date="2008" name="Proc. Natl. Acad. Sci. U.S.A.">
        <title>A quantitative atlas of mitotic phosphorylation.</title>
        <authorList>
            <person name="Dephoure N."/>
            <person name="Zhou C."/>
            <person name="Villen J."/>
            <person name="Beausoleil S.A."/>
            <person name="Bakalarski C.E."/>
            <person name="Elledge S.J."/>
            <person name="Gygi S.P."/>
        </authorList>
    </citation>
    <scope>PHOSPHORYLATION [LARGE SCALE ANALYSIS] AT SER-113 AND THR-130</scope>
    <scope>IDENTIFICATION BY MASS SPECTROMETRY [LARGE SCALE ANALYSIS]</scope>
    <source>
        <tissue>Cervix carcinoma</tissue>
    </source>
</reference>
<reference key="11">
    <citation type="journal article" date="2009" name="Mol. Cell. Proteomics">
        <title>Large-scale proteomics analysis of the human kinome.</title>
        <authorList>
            <person name="Oppermann F.S."/>
            <person name="Gnad F."/>
            <person name="Olsen J.V."/>
            <person name="Hornberger R."/>
            <person name="Greff Z."/>
            <person name="Keri G."/>
            <person name="Mann M."/>
            <person name="Daub H."/>
        </authorList>
    </citation>
    <scope>IDENTIFICATION BY MASS SPECTROMETRY [LARGE SCALE ANALYSIS]</scope>
</reference>
<reference key="12">
    <citation type="journal article" date="2009" name="Sci. Signal.">
        <title>Quantitative phosphoproteomic analysis of T cell receptor signaling reveals system-wide modulation of protein-protein interactions.</title>
        <authorList>
            <person name="Mayya V."/>
            <person name="Lundgren D.H."/>
            <person name="Hwang S.-I."/>
            <person name="Rezaul K."/>
            <person name="Wu L."/>
            <person name="Eng J.K."/>
            <person name="Rodionov V."/>
            <person name="Han D.K."/>
        </authorList>
    </citation>
    <scope>PHOSPHORYLATION [LARGE SCALE ANALYSIS] AT SER-113</scope>
    <scope>IDENTIFICATION BY MASS SPECTROMETRY [LARGE SCALE ANALYSIS]</scope>
    <source>
        <tissue>Leukemic T-cell</tissue>
    </source>
</reference>
<reference key="13">
    <citation type="journal article" date="2010" name="Sci. Signal.">
        <title>Quantitative phosphoproteomics reveals widespread full phosphorylation site occupancy during mitosis.</title>
        <authorList>
            <person name="Olsen J.V."/>
            <person name="Vermeulen M."/>
            <person name="Santamaria A."/>
            <person name="Kumar C."/>
            <person name="Miller M.L."/>
            <person name="Jensen L.J."/>
            <person name="Gnad F."/>
            <person name="Cox J."/>
            <person name="Jensen T.S."/>
            <person name="Nigg E.A."/>
            <person name="Brunak S."/>
            <person name="Mann M."/>
        </authorList>
    </citation>
    <scope>PHOSPHORYLATION [LARGE SCALE ANALYSIS] AT SER-113 AND THR-130</scope>
    <scope>IDENTIFICATION BY MASS SPECTROMETRY [LARGE SCALE ANALYSIS]</scope>
    <source>
        <tissue>Cervix carcinoma</tissue>
    </source>
</reference>
<reference key="14">
    <citation type="journal article" date="2011" name="BMC Syst. Biol.">
        <title>Initial characterization of the human central proteome.</title>
        <authorList>
            <person name="Burkard T.R."/>
            <person name="Planyavsky M."/>
            <person name="Kaupe I."/>
            <person name="Breitwieser F.P."/>
            <person name="Buerckstuemmer T."/>
            <person name="Bennett K.L."/>
            <person name="Superti-Furga G."/>
            <person name="Colinge J."/>
        </authorList>
    </citation>
    <scope>IDENTIFICATION BY MASS SPECTROMETRY [LARGE SCALE ANALYSIS]</scope>
</reference>
<reference key="15">
    <citation type="journal article" date="2011" name="Sci. Signal.">
        <title>System-wide temporal characterization of the proteome and phosphoproteome of human embryonic stem cell differentiation.</title>
        <authorList>
            <person name="Rigbolt K.T."/>
            <person name="Prokhorova T.A."/>
            <person name="Akimov V."/>
            <person name="Henningsen J."/>
            <person name="Johansen P.T."/>
            <person name="Kratchmarova I."/>
            <person name="Kassem M."/>
            <person name="Mann M."/>
            <person name="Olsen J.V."/>
            <person name="Blagoev B."/>
        </authorList>
    </citation>
    <scope>PHOSPHORYLATION [LARGE SCALE ANALYSIS] AT SER-113</scope>
    <scope>IDENTIFICATION BY MASS SPECTROMETRY [LARGE SCALE ANALYSIS]</scope>
</reference>
<reference key="16">
    <citation type="journal article" date="2013" name="J. Proteome Res.">
        <title>Toward a comprehensive characterization of a human cancer cell phosphoproteome.</title>
        <authorList>
            <person name="Zhou H."/>
            <person name="Di Palma S."/>
            <person name="Preisinger C."/>
            <person name="Peng M."/>
            <person name="Polat A.N."/>
            <person name="Heck A.J."/>
            <person name="Mohammed S."/>
        </authorList>
    </citation>
    <scope>PHOSPHORYLATION [LARGE SCALE ANALYSIS] AT SER-113</scope>
    <scope>IDENTIFICATION BY MASS SPECTROMETRY [LARGE SCALE ANALYSIS]</scope>
    <source>
        <tissue>Erythroleukemia</tissue>
    </source>
</reference>
<reference key="17">
    <citation type="journal article" date="2014" name="Curr. Opin. Struct. Biol.">
        <title>A new system for naming ribosomal proteins.</title>
        <authorList>
            <person name="Ban N."/>
            <person name="Beckmann R."/>
            <person name="Cate J.H.D."/>
            <person name="Dinman J.D."/>
            <person name="Dragon F."/>
            <person name="Ellis S.R."/>
            <person name="Lafontaine D.L.J."/>
            <person name="Lindahl L."/>
            <person name="Liljas A."/>
            <person name="Lipton J.M."/>
            <person name="McAlear M.A."/>
            <person name="Moore P.B."/>
            <person name="Noller H.F."/>
            <person name="Ortega J."/>
            <person name="Panse V.G."/>
            <person name="Ramakrishnan V."/>
            <person name="Spahn C.M.T."/>
            <person name="Steitz T.A."/>
            <person name="Tchorzewski M."/>
            <person name="Tollervey D."/>
            <person name="Warren A.J."/>
            <person name="Williamson J.R."/>
            <person name="Wilson D."/>
            <person name="Yonath A."/>
            <person name="Yusupov M."/>
        </authorList>
    </citation>
    <scope>NOMENCLATURE</scope>
</reference>
<reference key="18">
    <citation type="journal article" date="2014" name="J. Proteomics">
        <title>An enzyme assisted RP-RPLC approach for in-depth analysis of human liver phosphoproteome.</title>
        <authorList>
            <person name="Bian Y."/>
            <person name="Song C."/>
            <person name="Cheng K."/>
            <person name="Dong M."/>
            <person name="Wang F."/>
            <person name="Huang J."/>
            <person name="Sun D."/>
            <person name="Wang L."/>
            <person name="Ye M."/>
            <person name="Zou H."/>
        </authorList>
    </citation>
    <scope>IDENTIFICATION BY MASS SPECTROMETRY [LARGE SCALE ANALYSIS]</scope>
    <source>
        <tissue>Liver</tissue>
    </source>
</reference>
<reference key="19">
    <citation type="journal article" date="2014" name="Proc. Natl. Acad. Sci. U.S.A.">
        <title>Mapping of SUMO sites and analysis of SUMOylation changes induced by external stimuli.</title>
        <authorList>
            <person name="Impens F."/>
            <person name="Radoshevich L."/>
            <person name="Cossart P."/>
            <person name="Ribet D."/>
        </authorList>
    </citation>
    <scope>SUMOYLATION [LARGE SCALE ANALYSIS] AT LYS-103</scope>
    <scope>IDENTIFICATION BY MASS SPECTROMETRY [LARGE SCALE ANALYSIS]</scope>
</reference>
<reference key="20">
    <citation type="journal article" date="2015" name="Proteomics">
        <title>N-terminome analysis of the human mitochondrial proteome.</title>
        <authorList>
            <person name="Vaca Jacome A.S."/>
            <person name="Rabilloud T."/>
            <person name="Schaeffer-Reiss C."/>
            <person name="Rompais M."/>
            <person name="Ayoub D."/>
            <person name="Lane L."/>
            <person name="Bairoch A."/>
            <person name="Van Dorsselaer A."/>
            <person name="Carapito C."/>
        </authorList>
    </citation>
    <scope>IDENTIFICATION BY MASS SPECTROMETRY [LARGE SCALE ANALYSIS]</scope>
</reference>
<reference key="21">
    <citation type="journal article" date="2017" name="Nat. Struct. Mol. Biol.">
        <title>Site-specific mapping of the human SUMO proteome reveals co-modification with phosphorylation.</title>
        <authorList>
            <person name="Hendriks I.A."/>
            <person name="Lyon D."/>
            <person name="Young C."/>
            <person name="Jensen L.J."/>
            <person name="Vertegaal A.C."/>
            <person name="Nielsen M.L."/>
        </authorList>
    </citation>
    <scope>SUMOYLATION [LARGE SCALE ANALYSIS] AT LYS-103</scope>
    <scope>IDENTIFICATION BY MASS SPECTROMETRY [LARGE SCALE ANALYSIS]</scope>
</reference>
<reference key="22">
    <citation type="journal article" date="2023" name="Cell">
        <title>An E3 ligase network engages GCN1 to promote the degradation of translation factors on stalled ribosomes.</title>
        <authorList>
            <person name="Oltion K."/>
            <person name="Carelli J.D."/>
            <person name="Yang T."/>
            <person name="See S.K."/>
            <person name="Wang H.Y."/>
            <person name="Kampmann M."/>
            <person name="Taunton J."/>
        </authorList>
    </citation>
    <scope>UBIQUITINATION AT LYS-103</scope>
</reference>
<reference key="23">
    <citation type="journal article" date="2013" name="Nature">
        <title>Structures of the human and Drosophila 80S ribosome.</title>
        <authorList>
            <person name="Anger A.M."/>
            <person name="Armache J.P."/>
            <person name="Berninghausen O."/>
            <person name="Habeck M."/>
            <person name="Subklewe M."/>
            <person name="Wilson D.N."/>
            <person name="Beckmann R."/>
        </authorList>
    </citation>
    <scope>STRUCTURE BY ELECTRON MICROSCOPY (5.0 ANGSTROMS) OF 80S RIBOSOME</scope>
    <scope>FUNCTION</scope>
    <scope>SUBUNIT</scope>
    <scope>SUBCELLULAR LOCATION</scope>
</reference>
<reference evidence="11 12 13" key="24">
    <citation type="journal article" date="2021" name="Science">
        <title>Nucleolar maturation of the human small subunit processome.</title>
        <authorList>
            <person name="Singh S."/>
            <person name="Vanden Broeck A."/>
            <person name="Miller L."/>
            <person name="Chaker-Margot M."/>
            <person name="Klinge S."/>
        </authorList>
    </citation>
    <scope>STRUCTURE BY ELECTRON MICROSCOPY (2.70 ANGSTROMS)</scope>
    <scope>FUNCTION</scope>
    <scope>SUBUNIT</scope>
    <scope>SUBCELLULAR LOCATION</scope>
</reference>
<organism>
    <name type="scientific">Homo sapiens</name>
    <name type="common">Human</name>
    <dbReference type="NCBI Taxonomy" id="9606"/>
    <lineage>
        <taxon>Eukaryota</taxon>
        <taxon>Metazoa</taxon>
        <taxon>Chordata</taxon>
        <taxon>Craniata</taxon>
        <taxon>Vertebrata</taxon>
        <taxon>Euteleostomi</taxon>
        <taxon>Mammalia</taxon>
        <taxon>Eutheria</taxon>
        <taxon>Euarchontoglires</taxon>
        <taxon>Primates</taxon>
        <taxon>Haplorrhini</taxon>
        <taxon>Catarrhini</taxon>
        <taxon>Hominidae</taxon>
        <taxon>Homo</taxon>
    </lineage>
</organism>
<protein>
    <recommendedName>
        <fullName evidence="8">Small ribosomal subunit protein eS17</fullName>
    </recommendedName>
    <alternativeName>
        <fullName evidence="9">40S ribosomal protein S17</fullName>
    </alternativeName>
</protein>
<gene>
    <name evidence="10" type="primary">RPS17</name>
    <name evidence="10" type="synonym">RPS17L</name>
</gene>
<keyword id="KW-0002">3D-structure</keyword>
<keyword id="KW-0963">Cytoplasm</keyword>
<keyword id="KW-1024">Diamond-Blackfan anemia</keyword>
<keyword id="KW-0903">Direct protein sequencing</keyword>
<keyword id="KW-1017">Isopeptide bond</keyword>
<keyword id="KW-0539">Nucleus</keyword>
<keyword id="KW-0597">Phosphoprotein</keyword>
<keyword id="KW-1267">Proteomics identification</keyword>
<keyword id="KW-1185">Reference proteome</keyword>
<keyword id="KW-0687">Ribonucleoprotein</keyword>
<keyword id="KW-0689">Ribosomal protein</keyword>
<keyword id="KW-0832">Ubl conjugation</keyword>
<proteinExistence type="evidence at protein level"/>
<sequence length="135" mass="15550">MGRVRTKTVKKAARVIIEKYYTRLGNDFHTNKRVCEEIAIIPSKKLRNKIAGYVTHLMKRIQRGPVRGISIKLQEEERERRDNYVPEVSALDQEIIEVDPDTKEMLKLLDFGSLSNLQVTQPTVGMNFKTPRGPV</sequence>